<keyword id="KW-0067">ATP-binding</keyword>
<keyword id="KW-0963">Cytoplasm</keyword>
<keyword id="KW-0436">Ligase</keyword>
<keyword id="KW-0547">Nucleotide-binding</keyword>
<keyword id="KW-0566">Pantothenate biosynthesis</keyword>
<feature type="chain" id="PRO_1000097090" description="Pantothenate synthetase">
    <location>
        <begin position="1"/>
        <end position="292"/>
    </location>
</feature>
<feature type="active site" description="Proton donor" evidence="1">
    <location>
        <position position="37"/>
    </location>
</feature>
<feature type="binding site" evidence="1">
    <location>
        <begin position="30"/>
        <end position="37"/>
    </location>
    <ligand>
        <name>ATP</name>
        <dbReference type="ChEBI" id="CHEBI:30616"/>
    </ligand>
</feature>
<feature type="binding site" evidence="1">
    <location>
        <position position="61"/>
    </location>
    <ligand>
        <name>(R)-pantoate</name>
        <dbReference type="ChEBI" id="CHEBI:15980"/>
    </ligand>
</feature>
<feature type="binding site" evidence="1">
    <location>
        <position position="61"/>
    </location>
    <ligand>
        <name>beta-alanine</name>
        <dbReference type="ChEBI" id="CHEBI:57966"/>
    </ligand>
</feature>
<feature type="binding site" evidence="1">
    <location>
        <begin position="147"/>
        <end position="150"/>
    </location>
    <ligand>
        <name>ATP</name>
        <dbReference type="ChEBI" id="CHEBI:30616"/>
    </ligand>
</feature>
<feature type="binding site" evidence="1">
    <location>
        <position position="153"/>
    </location>
    <ligand>
        <name>(R)-pantoate</name>
        <dbReference type="ChEBI" id="CHEBI:15980"/>
    </ligand>
</feature>
<feature type="binding site" evidence="1">
    <location>
        <begin position="184"/>
        <end position="187"/>
    </location>
    <ligand>
        <name>ATP</name>
        <dbReference type="ChEBI" id="CHEBI:30616"/>
    </ligand>
</feature>
<evidence type="ECO:0000255" key="1">
    <source>
        <dbReference type="HAMAP-Rule" id="MF_00158"/>
    </source>
</evidence>
<name>PANC_CHLPM</name>
<reference key="1">
    <citation type="submission" date="2007-03" db="EMBL/GenBank/DDBJ databases">
        <title>Complete sequence of Prosthecochloris vibrioformis DSM 265.</title>
        <authorList>
            <consortium name="US DOE Joint Genome Institute"/>
            <person name="Copeland A."/>
            <person name="Lucas S."/>
            <person name="Lapidus A."/>
            <person name="Barry K."/>
            <person name="Detter J.C."/>
            <person name="Glavina del Rio T."/>
            <person name="Hammon N."/>
            <person name="Israni S."/>
            <person name="Pitluck S."/>
            <person name="Schmutz J."/>
            <person name="Larimer F."/>
            <person name="Land M."/>
            <person name="Hauser L."/>
            <person name="Mikhailova N."/>
            <person name="Li T."/>
            <person name="Overmann J."/>
            <person name="Schuster S.C."/>
            <person name="Bryant D.A."/>
            <person name="Richardson P."/>
        </authorList>
    </citation>
    <scope>NUCLEOTIDE SEQUENCE [LARGE SCALE GENOMIC DNA]</scope>
    <source>
        <strain>DSM 265 / 1930</strain>
    </source>
</reference>
<sequence>MQTVTDPVEMQTISEKLRLGRQLIGVVMTMGALHEGHISLVKLAREQAGTVILTIFVNPTQFGPNEDFHRYPRPFEQDAALARSAGVDYLFAPEAGAIYPEGFSTAISCSGVSDLLEGEKRPGHFSGVATVVTKLLNITRPHLAVFGEKDAQQLAVIRRVVTDLNIPVKVVAAPTMRESNGLAVSSRNIYLTAGQRESAGAIWRSLQHALDRLAAGETGLKELAEATATMIASESGFRVDYVAFVDEETFMPAERALKGRSYRILAAVFAGGIRLIDNACFASPTHIAGEEA</sequence>
<comment type="function">
    <text evidence="1">Catalyzes the condensation of pantoate with beta-alanine in an ATP-dependent reaction via a pantoyl-adenylate intermediate.</text>
</comment>
<comment type="catalytic activity">
    <reaction evidence="1">
        <text>(R)-pantoate + beta-alanine + ATP = (R)-pantothenate + AMP + diphosphate + H(+)</text>
        <dbReference type="Rhea" id="RHEA:10912"/>
        <dbReference type="ChEBI" id="CHEBI:15378"/>
        <dbReference type="ChEBI" id="CHEBI:15980"/>
        <dbReference type="ChEBI" id="CHEBI:29032"/>
        <dbReference type="ChEBI" id="CHEBI:30616"/>
        <dbReference type="ChEBI" id="CHEBI:33019"/>
        <dbReference type="ChEBI" id="CHEBI:57966"/>
        <dbReference type="ChEBI" id="CHEBI:456215"/>
        <dbReference type="EC" id="6.3.2.1"/>
    </reaction>
</comment>
<comment type="pathway">
    <text evidence="1">Cofactor biosynthesis; (R)-pantothenate biosynthesis; (R)-pantothenate from (R)-pantoate and beta-alanine: step 1/1.</text>
</comment>
<comment type="subunit">
    <text evidence="1">Homodimer.</text>
</comment>
<comment type="subcellular location">
    <subcellularLocation>
        <location evidence="1">Cytoplasm</location>
    </subcellularLocation>
</comment>
<comment type="miscellaneous">
    <text evidence="1">The reaction proceeds by a bi uni uni bi ping pong mechanism.</text>
</comment>
<comment type="similarity">
    <text evidence="1">Belongs to the pantothenate synthetase family.</text>
</comment>
<gene>
    <name evidence="1" type="primary">panC</name>
    <name type="ordered locus">Cvib_1423</name>
</gene>
<accession>A4SG25</accession>
<protein>
    <recommendedName>
        <fullName evidence="1">Pantothenate synthetase</fullName>
        <shortName evidence="1">PS</shortName>
        <ecNumber evidence="1">6.3.2.1</ecNumber>
    </recommendedName>
    <alternativeName>
        <fullName evidence="1">Pantoate--beta-alanine ligase</fullName>
    </alternativeName>
    <alternativeName>
        <fullName evidence="1">Pantoate-activating enzyme</fullName>
    </alternativeName>
</protein>
<proteinExistence type="inferred from homology"/>
<dbReference type="EC" id="6.3.2.1" evidence="1"/>
<dbReference type="EMBL" id="CP000607">
    <property type="protein sequence ID" value="ABP37434.1"/>
    <property type="molecule type" value="Genomic_DNA"/>
</dbReference>
<dbReference type="SMR" id="A4SG25"/>
<dbReference type="STRING" id="290318.Cvib_1423"/>
<dbReference type="KEGG" id="pvi:Cvib_1423"/>
<dbReference type="eggNOG" id="COG0414">
    <property type="taxonomic scope" value="Bacteria"/>
</dbReference>
<dbReference type="HOGENOM" id="CLU_047148_0_0_10"/>
<dbReference type="OrthoDB" id="9773087at2"/>
<dbReference type="UniPathway" id="UPA00028">
    <property type="reaction ID" value="UER00005"/>
</dbReference>
<dbReference type="GO" id="GO:0005829">
    <property type="term" value="C:cytosol"/>
    <property type="evidence" value="ECO:0007669"/>
    <property type="project" value="TreeGrafter"/>
</dbReference>
<dbReference type="GO" id="GO:0005524">
    <property type="term" value="F:ATP binding"/>
    <property type="evidence" value="ECO:0007669"/>
    <property type="project" value="UniProtKB-KW"/>
</dbReference>
<dbReference type="GO" id="GO:0004592">
    <property type="term" value="F:pantoate-beta-alanine ligase activity"/>
    <property type="evidence" value="ECO:0007669"/>
    <property type="project" value="UniProtKB-UniRule"/>
</dbReference>
<dbReference type="GO" id="GO:0015940">
    <property type="term" value="P:pantothenate biosynthetic process"/>
    <property type="evidence" value="ECO:0007669"/>
    <property type="project" value="UniProtKB-UniRule"/>
</dbReference>
<dbReference type="CDD" id="cd00560">
    <property type="entry name" value="PanC"/>
    <property type="match status" value="1"/>
</dbReference>
<dbReference type="FunFam" id="3.40.50.620:FF:000114">
    <property type="entry name" value="Pantothenate synthetase"/>
    <property type="match status" value="1"/>
</dbReference>
<dbReference type="Gene3D" id="3.40.50.620">
    <property type="entry name" value="HUPs"/>
    <property type="match status" value="1"/>
</dbReference>
<dbReference type="Gene3D" id="3.30.1300.10">
    <property type="entry name" value="Pantoate-beta-alanine ligase, C-terminal domain"/>
    <property type="match status" value="1"/>
</dbReference>
<dbReference type="HAMAP" id="MF_00158">
    <property type="entry name" value="PanC"/>
    <property type="match status" value="1"/>
</dbReference>
<dbReference type="InterPro" id="IPR004821">
    <property type="entry name" value="Cyt_trans-like"/>
</dbReference>
<dbReference type="InterPro" id="IPR003721">
    <property type="entry name" value="Pantoate_ligase"/>
</dbReference>
<dbReference type="InterPro" id="IPR042176">
    <property type="entry name" value="Pantoate_ligase_C"/>
</dbReference>
<dbReference type="InterPro" id="IPR014729">
    <property type="entry name" value="Rossmann-like_a/b/a_fold"/>
</dbReference>
<dbReference type="NCBIfam" id="TIGR00125">
    <property type="entry name" value="cyt_tran_rel"/>
    <property type="match status" value="1"/>
</dbReference>
<dbReference type="NCBIfam" id="TIGR00018">
    <property type="entry name" value="panC"/>
    <property type="match status" value="1"/>
</dbReference>
<dbReference type="PANTHER" id="PTHR21299">
    <property type="entry name" value="CYTIDYLATE KINASE/PANTOATE-BETA-ALANINE LIGASE"/>
    <property type="match status" value="1"/>
</dbReference>
<dbReference type="PANTHER" id="PTHR21299:SF1">
    <property type="entry name" value="PANTOATE--BETA-ALANINE LIGASE"/>
    <property type="match status" value="1"/>
</dbReference>
<dbReference type="Pfam" id="PF02569">
    <property type="entry name" value="Pantoate_ligase"/>
    <property type="match status" value="1"/>
</dbReference>
<dbReference type="SUPFAM" id="SSF52374">
    <property type="entry name" value="Nucleotidylyl transferase"/>
    <property type="match status" value="1"/>
</dbReference>
<organism>
    <name type="scientific">Chlorobium phaeovibrioides (strain DSM 265 / 1930)</name>
    <name type="common">Prosthecochloris vibrioformis (strain DSM 265)</name>
    <dbReference type="NCBI Taxonomy" id="290318"/>
    <lineage>
        <taxon>Bacteria</taxon>
        <taxon>Pseudomonadati</taxon>
        <taxon>Chlorobiota</taxon>
        <taxon>Chlorobiia</taxon>
        <taxon>Chlorobiales</taxon>
        <taxon>Chlorobiaceae</taxon>
        <taxon>Chlorobium/Pelodictyon group</taxon>
        <taxon>Chlorobium</taxon>
    </lineage>
</organism>